<accession>P62321</accession>
<proteinExistence type="inferred from homology"/>
<reference key="1">
    <citation type="submission" date="2003-08" db="EMBL/GenBank/DDBJ databases">
        <authorList>
            <consortium name="NIH - Xenopus Gene Collection (XGC) project"/>
        </authorList>
    </citation>
    <scope>NUCLEOTIDE SEQUENCE [LARGE SCALE MRNA]</scope>
    <source>
        <tissue>Ovary</tissue>
    </source>
</reference>
<comment type="function">
    <text evidence="2">Plays a role in pre-mRNA splicing as a core component of the spliceosomal U1, U2, U4 and U5 small nuclear ribonucleoproteins (snRNPs), the building blocks of the spliceosome. Component of both the pre-catalytic spliceosome B complex and activated spliceosome C complexes. As a component of the minor spliceosome, involved in the splicing of U12-type introns in pre-mRNAs. As part of the U7 snRNP it is involved in histone 3'-end processing.</text>
</comment>
<comment type="subunit">
    <text evidence="1">Core component of the spliceosomal U1, U2, U4 and U5 small nuclear ribonucleoproteins (snRNPs), the building blocks of the spliceosome. Most spliceosomal snRNPs contain a common set of Sm proteins, snrpb, snrpd1, snrpd2, snrpd3, snrpe, snrpf and snrpg that assemble in a heptameric protein ring on the Sm site of the small nuclear RNA to form the core snRNP. Component of the U1 snRNP. The U1 snRNP is composed of the U1 snRNA and the 7 core Sm proteins snrpb, snrpd1, snrpd2, snrpd3, snrpe, snrpf and snrpg, and at least three U1 snRNP-specific proteins snrnp70/u1-70k, snrpa/u1-a and snrpc/u1-c. Component of the U4/U6-U5 tri-snRNP complex composed of the U4, U6 and U5 snRNAs and at least prpf3, prpf4, prpf6, prpf8, prpf31, snrnp200, txnl4a, snrnp40, snrpb, snrpd1, snrpd2, snrpd3, snrpe, snrpf, snrpg, ddx23, cd2bp2, ppih, snu13, eftud2, sart1 and usp39, plus lsm2, lsm3, lsm4, lsm5, lsm6, lsm7 and lsm8. Component of the U7 snRNP complex, or U7 Sm protein core complex, that is composed of the U7 snRNA and at least lsm10, lsm11, snrpb, snrpd3, snrpe, snrpf and snrpg; the complex does not contain snrpd1 and snrpd2. Component of the minor spliceosome, which splices U12-type introns. Part of the SMN-Sm complex that contains smn1, gemin2/sip1, ddx20/gemin3, gemin4, gemin5, gemin6, gemin7, gemin8, strap/unrip and the Sm proteins snrpb, snrpd1, snrpd2, snrpd3, snrpe, snrpf and snrpg; catalyzes core snRNPs assembly. Forms a 6S pICln-Sm complex composed of clns1a/pICln, snrpd1, snrpd2, snrpe, snrpf and snrpg; ring-like structure where clns1a/pICln mimics additional Sm proteins and which is unable to assemble into the core snRNP.</text>
</comment>
<comment type="subcellular location">
    <subcellularLocation>
        <location evidence="2">Cytoplasm</location>
        <location evidence="2">Cytosol</location>
    </subcellularLocation>
    <subcellularLocation>
        <location evidence="2">Nucleus</location>
    </subcellularLocation>
    <text evidence="2">SMN-mediated assembly into core snRNPs occurs in the cytosol before SMN-mediated transport to the nucleus to be included in spliceosomes.</text>
</comment>
<comment type="similarity">
    <text evidence="4">Belongs to the snRNP Sm proteins family. SmF/LSm6 subfamily.</text>
</comment>
<sequence>MSLPLNPKPFLNGLTGKPVMVKLKWGMEYKGYLVSVDGYMNMQLANTEEYIDGALSGHLGEVLIRCNNVLYIRGVEEEEEDGEMRE</sequence>
<name>RUXF_XENLA</name>
<feature type="chain" id="PRO_0000125538" description="Small nuclear ribonucleoprotein F">
    <location>
        <begin position="1"/>
        <end position="86"/>
    </location>
</feature>
<feature type="domain" description="Sm" evidence="3">
    <location>
        <begin position="6"/>
        <end position="78"/>
    </location>
</feature>
<keyword id="KW-0963">Cytoplasm</keyword>
<keyword id="KW-0507">mRNA processing</keyword>
<keyword id="KW-0508">mRNA splicing</keyword>
<keyword id="KW-0539">Nucleus</keyword>
<keyword id="KW-1185">Reference proteome</keyword>
<keyword id="KW-0687">Ribonucleoprotein</keyword>
<keyword id="KW-0694">RNA-binding</keyword>
<keyword id="KW-0747">Spliceosome</keyword>
<evidence type="ECO:0000250" key="1">
    <source>
        <dbReference type="UniProtKB" id="P62304"/>
    </source>
</evidence>
<evidence type="ECO:0000250" key="2">
    <source>
        <dbReference type="UniProtKB" id="P62306"/>
    </source>
</evidence>
<evidence type="ECO:0000255" key="3">
    <source>
        <dbReference type="PROSITE-ProRule" id="PRU01346"/>
    </source>
</evidence>
<evidence type="ECO:0000305" key="4"/>
<protein>
    <recommendedName>
        <fullName>Small nuclear ribonucleoprotein F</fullName>
        <shortName>snRNP-F</shortName>
    </recommendedName>
    <alternativeName>
        <fullName>Sm protein F</fullName>
        <shortName>Sm-F</shortName>
        <shortName>SmF</shortName>
    </alternativeName>
</protein>
<organism>
    <name type="scientific">Xenopus laevis</name>
    <name type="common">African clawed frog</name>
    <dbReference type="NCBI Taxonomy" id="8355"/>
    <lineage>
        <taxon>Eukaryota</taxon>
        <taxon>Metazoa</taxon>
        <taxon>Chordata</taxon>
        <taxon>Craniata</taxon>
        <taxon>Vertebrata</taxon>
        <taxon>Euteleostomi</taxon>
        <taxon>Amphibia</taxon>
        <taxon>Batrachia</taxon>
        <taxon>Anura</taxon>
        <taxon>Pipoidea</taxon>
        <taxon>Pipidae</taxon>
        <taxon>Xenopodinae</taxon>
        <taxon>Xenopus</taxon>
        <taxon>Xenopus</taxon>
    </lineage>
</organism>
<dbReference type="EMBL" id="BC056127">
    <property type="protein sequence ID" value="AAH56127.1"/>
    <property type="molecule type" value="mRNA"/>
</dbReference>
<dbReference type="RefSeq" id="NP_001080901.1">
    <property type="nucleotide sequence ID" value="NM_001087432.1"/>
</dbReference>
<dbReference type="SMR" id="P62321"/>
<dbReference type="DNASU" id="380595"/>
<dbReference type="GeneID" id="380595"/>
<dbReference type="KEGG" id="xla:108711072"/>
<dbReference type="KEGG" id="xla:380595"/>
<dbReference type="AGR" id="Xenbase:XB-GENE-1188432"/>
<dbReference type="CTD" id="108711072"/>
<dbReference type="CTD" id="380595"/>
<dbReference type="Xenbase" id="XB-GENE-1188432">
    <property type="gene designation" value="snrpf.S"/>
</dbReference>
<dbReference type="OMA" id="KFLRCLT"/>
<dbReference type="OrthoDB" id="9582814at2759"/>
<dbReference type="EvolutionaryTrace" id="P62321"/>
<dbReference type="Proteomes" id="UP000186698">
    <property type="component" value="Chromosome 3L"/>
</dbReference>
<dbReference type="Proteomes" id="UP000186698">
    <property type="component" value="Chromosome 3S"/>
</dbReference>
<dbReference type="Bgee" id="108711072">
    <property type="expression patterns" value="Expressed in neurula embryo and 19 other cell types or tissues"/>
</dbReference>
<dbReference type="GO" id="GO:0071013">
    <property type="term" value="C:catalytic step 2 spliceosome"/>
    <property type="evidence" value="ECO:0000318"/>
    <property type="project" value="GO_Central"/>
</dbReference>
<dbReference type="GO" id="GO:0005829">
    <property type="term" value="C:cytosol"/>
    <property type="evidence" value="ECO:0000250"/>
    <property type="project" value="UniProtKB"/>
</dbReference>
<dbReference type="GO" id="GO:0034709">
    <property type="term" value="C:methylosome"/>
    <property type="evidence" value="ECO:0000250"/>
    <property type="project" value="UniProtKB"/>
</dbReference>
<dbReference type="GO" id="GO:0005634">
    <property type="term" value="C:nucleus"/>
    <property type="evidence" value="ECO:0000250"/>
    <property type="project" value="UniProtKB"/>
</dbReference>
<dbReference type="GO" id="GO:0034715">
    <property type="term" value="C:pICln-Sm protein complex"/>
    <property type="evidence" value="ECO:0000250"/>
    <property type="project" value="UniProtKB"/>
</dbReference>
<dbReference type="GO" id="GO:0034719">
    <property type="term" value="C:SMN-Sm protein complex"/>
    <property type="evidence" value="ECO:0000250"/>
    <property type="project" value="UniProtKB"/>
</dbReference>
<dbReference type="GO" id="GO:0005685">
    <property type="term" value="C:U1 snRNP"/>
    <property type="evidence" value="ECO:0000250"/>
    <property type="project" value="UniProtKB"/>
</dbReference>
<dbReference type="GO" id="GO:0071007">
    <property type="term" value="C:U2-type catalytic step 2 spliceosome"/>
    <property type="evidence" value="ECO:0000250"/>
    <property type="project" value="UniProtKB"/>
</dbReference>
<dbReference type="GO" id="GO:0071005">
    <property type="term" value="C:U2-type precatalytic spliceosome"/>
    <property type="evidence" value="ECO:0000250"/>
    <property type="project" value="UniProtKB"/>
</dbReference>
<dbReference type="GO" id="GO:0005684">
    <property type="term" value="C:U2-type spliceosomal complex"/>
    <property type="evidence" value="ECO:0000250"/>
    <property type="project" value="UniProtKB"/>
</dbReference>
<dbReference type="GO" id="GO:0005687">
    <property type="term" value="C:U4 snRNP"/>
    <property type="evidence" value="ECO:0000250"/>
    <property type="project" value="UniProtKB"/>
</dbReference>
<dbReference type="GO" id="GO:0046540">
    <property type="term" value="C:U4/U6 x U5 tri-snRNP complex"/>
    <property type="evidence" value="ECO:0000250"/>
    <property type="project" value="UniProtKB"/>
</dbReference>
<dbReference type="GO" id="GO:0003723">
    <property type="term" value="F:RNA binding"/>
    <property type="evidence" value="ECO:0000318"/>
    <property type="project" value="GO_Central"/>
</dbReference>
<dbReference type="GO" id="GO:0000398">
    <property type="term" value="P:mRNA splicing, via spliceosome"/>
    <property type="evidence" value="ECO:0000250"/>
    <property type="project" value="UniProtKB"/>
</dbReference>
<dbReference type="GO" id="GO:0000387">
    <property type="term" value="P:spliceosomal snRNP assembly"/>
    <property type="evidence" value="ECO:0000250"/>
    <property type="project" value="UniProtKB"/>
</dbReference>
<dbReference type="CDD" id="cd01722">
    <property type="entry name" value="Sm_F"/>
    <property type="match status" value="1"/>
</dbReference>
<dbReference type="FunFam" id="2.30.30.100:FF:000133">
    <property type="entry name" value="Small nuclear ribonucleoprotein F"/>
    <property type="match status" value="1"/>
</dbReference>
<dbReference type="Gene3D" id="2.30.30.100">
    <property type="match status" value="1"/>
</dbReference>
<dbReference type="InterPro" id="IPR016487">
    <property type="entry name" value="Lsm6/sSmF"/>
</dbReference>
<dbReference type="InterPro" id="IPR010920">
    <property type="entry name" value="LSM_dom_sf"/>
</dbReference>
<dbReference type="InterPro" id="IPR047575">
    <property type="entry name" value="Sm"/>
</dbReference>
<dbReference type="InterPro" id="IPR001163">
    <property type="entry name" value="Sm_dom_euk/arc"/>
</dbReference>
<dbReference type="InterPro" id="IPR034100">
    <property type="entry name" value="Sm_F"/>
</dbReference>
<dbReference type="PANTHER" id="PTHR11021:SF0">
    <property type="entry name" value="SMALL NUCLEAR RIBONUCLEOPROTEIN F"/>
    <property type="match status" value="1"/>
</dbReference>
<dbReference type="PANTHER" id="PTHR11021">
    <property type="entry name" value="SMALL NUCLEAR RIBONUCLEOPROTEIN F SNRNP-F"/>
    <property type="match status" value="1"/>
</dbReference>
<dbReference type="Pfam" id="PF01423">
    <property type="entry name" value="LSM"/>
    <property type="match status" value="1"/>
</dbReference>
<dbReference type="PIRSF" id="PIRSF006609">
    <property type="entry name" value="snRNP_SmF"/>
    <property type="match status" value="1"/>
</dbReference>
<dbReference type="SMART" id="SM00651">
    <property type="entry name" value="Sm"/>
    <property type="match status" value="1"/>
</dbReference>
<dbReference type="SUPFAM" id="SSF50182">
    <property type="entry name" value="Sm-like ribonucleoproteins"/>
    <property type="match status" value="1"/>
</dbReference>
<dbReference type="PROSITE" id="PS52002">
    <property type="entry name" value="SM"/>
    <property type="match status" value="1"/>
</dbReference>
<gene>
    <name type="primary">snrpf</name>
</gene>